<sequence length="283" mass="30334">MGLGLRGWGRPLLTVATALMLPVKPPAGSWGAQIIGGHEVTPHSRPYMASVRFGGQHHCGGFLLRARWVVSAAHCFSHRDLRTGLVVLGAHVLSTAEPTQQVFGIDALTTHPDYHPMTHANDICLLRLNGSAVLGPAVGLLRPPGRRARPPTAGTRCRVAGWGFVSDFEELPPGLMEAKVRVLDPDVCNSSWKGHLTLTMLCTRSGDSHRRGFCSADSGGPLVCRNRAHGLVSFSGLWCGDPKTPDVYTQVSAFVAWIWDVVRRSSPQPGPLPGTTRPPGEAA</sequence>
<protein>
    <recommendedName>
        <fullName>Serine protease 57</fullName>
        <ecNumber evidence="4 5 6">3.4.21.-</ecNumber>
    </recommendedName>
    <alternativeName>
        <fullName evidence="7 9">Neutrophil serine protease 4</fullName>
        <shortName evidence="7 8 9">NSP4</shortName>
    </alternativeName>
    <alternativeName>
        <fullName>Serine protease 1-like protein 1</fullName>
    </alternativeName>
</protein>
<accession>Q6UWY2</accession>
<accession>B2RNW8</accession>
<keyword id="KW-0002">3D-structure</keyword>
<keyword id="KW-1015">Disulfide bond</keyword>
<keyword id="KW-0325">Glycoprotein</keyword>
<keyword id="KW-0358">Heparin-binding</keyword>
<keyword id="KW-0378">Hydrolase</keyword>
<keyword id="KW-0645">Protease</keyword>
<keyword id="KW-1267">Proteomics identification</keyword>
<keyword id="KW-1185">Reference proteome</keyword>
<keyword id="KW-0964">Secreted</keyword>
<keyword id="KW-0720">Serine protease</keyword>
<keyword id="KW-0732">Signal</keyword>
<gene>
    <name type="primary">PRSS57</name>
    <name type="synonym">PRSSL1</name>
    <name type="ORF">UNQ782/PRO1599</name>
</gene>
<dbReference type="EC" id="3.4.21.-" evidence="4 5 6"/>
<dbReference type="EMBL" id="AY358594">
    <property type="protein sequence ID" value="AAQ88957.1"/>
    <property type="molecule type" value="mRNA"/>
</dbReference>
<dbReference type="EMBL" id="AC004156">
    <property type="status" value="NOT_ANNOTATED_CDS"/>
    <property type="molecule type" value="Genomic_DNA"/>
</dbReference>
<dbReference type="EMBL" id="AC112708">
    <property type="status" value="NOT_ANNOTATED_CDS"/>
    <property type="molecule type" value="Genomic_DNA"/>
</dbReference>
<dbReference type="EMBL" id="BC137161">
    <property type="protein sequence ID" value="AAI37162.1"/>
    <property type="molecule type" value="mRNA"/>
</dbReference>
<dbReference type="CCDS" id="CCDS12041.1"/>
<dbReference type="RefSeq" id="NP_999875.2">
    <property type="nucleotide sequence ID" value="NM_214710.5"/>
</dbReference>
<dbReference type="PDB" id="4Q7X">
    <property type="method" value="X-ray"/>
    <property type="resolution" value="2.55 A"/>
    <property type="chains" value="A/B=34-283"/>
</dbReference>
<dbReference type="PDB" id="4Q7Y">
    <property type="method" value="X-ray"/>
    <property type="resolution" value="2.70 A"/>
    <property type="chains" value="A=34-283"/>
</dbReference>
<dbReference type="PDB" id="4Q7Z">
    <property type="method" value="X-ray"/>
    <property type="resolution" value="1.40 A"/>
    <property type="chains" value="A=34-283"/>
</dbReference>
<dbReference type="PDB" id="4Q80">
    <property type="method" value="X-ray"/>
    <property type="resolution" value="3.07 A"/>
    <property type="chains" value="A/B=34-283"/>
</dbReference>
<dbReference type="PDBsum" id="4Q7X"/>
<dbReference type="PDBsum" id="4Q7Y"/>
<dbReference type="PDBsum" id="4Q7Z"/>
<dbReference type="PDBsum" id="4Q80"/>
<dbReference type="SMR" id="Q6UWY2"/>
<dbReference type="FunCoup" id="Q6UWY2">
    <property type="interactions" value="135"/>
</dbReference>
<dbReference type="STRING" id="9606.ENSP00000482358"/>
<dbReference type="MEROPS" id="S01.319"/>
<dbReference type="GlyCosmos" id="Q6UWY2">
    <property type="glycosylation" value="2 sites, No reported glycans"/>
</dbReference>
<dbReference type="GlyGen" id="Q6UWY2">
    <property type="glycosylation" value="4 sites, 1 O-linked glycan (2 sites)"/>
</dbReference>
<dbReference type="BioMuta" id="PRSS57"/>
<dbReference type="DMDM" id="296452873"/>
<dbReference type="MassIVE" id="Q6UWY2"/>
<dbReference type="PaxDb" id="9606-ENSP00000482358"/>
<dbReference type="PeptideAtlas" id="Q6UWY2"/>
<dbReference type="ProteomicsDB" id="67537"/>
<dbReference type="Antibodypedia" id="1455">
    <property type="antibodies" value="56 antibodies from 15 providers"/>
</dbReference>
<dbReference type="DNASU" id="400668"/>
<dbReference type="Ensembl" id="ENST00000613411.4">
    <property type="protein sequence ID" value="ENSP00000482358.1"/>
    <property type="gene ID" value="ENSG00000185198.12"/>
</dbReference>
<dbReference type="GeneID" id="400668"/>
<dbReference type="KEGG" id="hsa:400668"/>
<dbReference type="UCSC" id="uc002lpl.2">
    <property type="organism name" value="human"/>
</dbReference>
<dbReference type="AGR" id="HGNC:31397"/>
<dbReference type="CTD" id="400668"/>
<dbReference type="DisGeNET" id="400668"/>
<dbReference type="GeneCards" id="PRSS57"/>
<dbReference type="HGNC" id="HGNC:31397">
    <property type="gene designation" value="PRSS57"/>
</dbReference>
<dbReference type="HPA" id="ENSG00000185198">
    <property type="expression patterns" value="Tissue enriched (bone)"/>
</dbReference>
<dbReference type="neXtProt" id="NX_Q6UWY2"/>
<dbReference type="OpenTargets" id="ENSG00000185198"/>
<dbReference type="PharmGKB" id="PA166049004"/>
<dbReference type="VEuPathDB" id="HostDB:ENSG00000185198"/>
<dbReference type="eggNOG" id="KOG3627">
    <property type="taxonomic scope" value="Eukaryota"/>
</dbReference>
<dbReference type="GeneTree" id="ENSGT00940000162457"/>
<dbReference type="HOGENOM" id="CLU_006842_1_0_1"/>
<dbReference type="InParanoid" id="Q6UWY2"/>
<dbReference type="OMA" id="VCNSSWR"/>
<dbReference type="OrthoDB" id="8440449at2759"/>
<dbReference type="PAN-GO" id="Q6UWY2">
    <property type="GO annotations" value="0 GO annotations based on evolutionary models"/>
</dbReference>
<dbReference type="PhylomeDB" id="Q6UWY2"/>
<dbReference type="TreeFam" id="TF333630"/>
<dbReference type="PathwayCommons" id="Q6UWY2"/>
<dbReference type="SABIO-RK" id="Q6UWY2"/>
<dbReference type="BioGRID-ORCS" id="400668">
    <property type="hits" value="13 hits in 1147 CRISPR screens"/>
</dbReference>
<dbReference type="EvolutionaryTrace" id="Q6UWY2"/>
<dbReference type="GenomeRNAi" id="400668"/>
<dbReference type="Pharos" id="Q6UWY2">
    <property type="development level" value="Tbio"/>
</dbReference>
<dbReference type="PRO" id="PR:Q6UWY2"/>
<dbReference type="Proteomes" id="UP000005640">
    <property type="component" value="Chromosome 19"/>
</dbReference>
<dbReference type="RNAct" id="Q6UWY2">
    <property type="molecule type" value="protein"/>
</dbReference>
<dbReference type="Bgee" id="ENSG00000185198">
    <property type="expression patterns" value="Expressed in bone marrow and 34 other cell types or tissues"/>
</dbReference>
<dbReference type="ExpressionAtlas" id="Q6UWY2">
    <property type="expression patterns" value="baseline and differential"/>
</dbReference>
<dbReference type="GO" id="GO:0035578">
    <property type="term" value="C:azurophil granule lumen"/>
    <property type="evidence" value="ECO:0000314"/>
    <property type="project" value="UniProtKB"/>
</dbReference>
<dbReference type="GO" id="GO:0005615">
    <property type="term" value="C:extracellular space"/>
    <property type="evidence" value="ECO:0000314"/>
    <property type="project" value="UniProtKB"/>
</dbReference>
<dbReference type="GO" id="GO:0008201">
    <property type="term" value="F:heparin binding"/>
    <property type="evidence" value="ECO:0000314"/>
    <property type="project" value="UniProtKB"/>
</dbReference>
<dbReference type="GO" id="GO:0004252">
    <property type="term" value="F:serine-type endopeptidase activity"/>
    <property type="evidence" value="ECO:0000318"/>
    <property type="project" value="GO_Central"/>
</dbReference>
<dbReference type="GO" id="GO:0008236">
    <property type="term" value="F:serine-type peptidase activity"/>
    <property type="evidence" value="ECO:0000314"/>
    <property type="project" value="UniProtKB"/>
</dbReference>
<dbReference type="GO" id="GO:0051604">
    <property type="term" value="P:protein maturation"/>
    <property type="evidence" value="ECO:0000318"/>
    <property type="project" value="GO_Central"/>
</dbReference>
<dbReference type="GO" id="GO:0006508">
    <property type="term" value="P:proteolysis"/>
    <property type="evidence" value="ECO:0000314"/>
    <property type="project" value="UniProtKB"/>
</dbReference>
<dbReference type="CDD" id="cd00190">
    <property type="entry name" value="Tryp_SPc"/>
    <property type="match status" value="1"/>
</dbReference>
<dbReference type="FunFam" id="2.40.10.10:FF:000052">
    <property type="entry name" value="Neutrophil elastase"/>
    <property type="match status" value="1"/>
</dbReference>
<dbReference type="FunFam" id="2.40.10.10:FF:000005">
    <property type="entry name" value="Serine protease 37"/>
    <property type="match status" value="1"/>
</dbReference>
<dbReference type="Gene3D" id="2.40.10.10">
    <property type="entry name" value="Trypsin-like serine proteases"/>
    <property type="match status" value="2"/>
</dbReference>
<dbReference type="InterPro" id="IPR009003">
    <property type="entry name" value="Peptidase_S1_PA"/>
</dbReference>
<dbReference type="InterPro" id="IPR043504">
    <property type="entry name" value="Peptidase_S1_PA_chymotrypsin"/>
</dbReference>
<dbReference type="InterPro" id="IPR001314">
    <property type="entry name" value="Peptidase_S1A"/>
</dbReference>
<dbReference type="InterPro" id="IPR001254">
    <property type="entry name" value="Trypsin_dom"/>
</dbReference>
<dbReference type="InterPro" id="IPR018114">
    <property type="entry name" value="TRYPSIN_HIS"/>
</dbReference>
<dbReference type="PANTHER" id="PTHR24271">
    <property type="entry name" value="KALLIKREIN-RELATED"/>
    <property type="match status" value="1"/>
</dbReference>
<dbReference type="PANTHER" id="PTHR24271:SF55">
    <property type="entry name" value="SERINE PROTEASE 57"/>
    <property type="match status" value="1"/>
</dbReference>
<dbReference type="Pfam" id="PF00089">
    <property type="entry name" value="Trypsin"/>
    <property type="match status" value="1"/>
</dbReference>
<dbReference type="PRINTS" id="PR00722">
    <property type="entry name" value="CHYMOTRYPSIN"/>
</dbReference>
<dbReference type="SMART" id="SM00020">
    <property type="entry name" value="Tryp_SPc"/>
    <property type="match status" value="1"/>
</dbReference>
<dbReference type="SUPFAM" id="SSF50494">
    <property type="entry name" value="Trypsin-like serine proteases"/>
    <property type="match status" value="1"/>
</dbReference>
<dbReference type="PROSITE" id="PS50240">
    <property type="entry name" value="TRYPSIN_DOM"/>
    <property type="match status" value="1"/>
</dbReference>
<dbReference type="PROSITE" id="PS00134">
    <property type="entry name" value="TRYPSIN_HIS"/>
    <property type="match status" value="1"/>
</dbReference>
<comment type="function">
    <text evidence="4 5 6">Serine protease that cleaves preferentially after Arg residues (PubMed:22474388, PubMed:23904161, PubMed:25156428). Can also cleave after citrulline (deimidated arginine) and methylarginine residues (PubMed:25156428).</text>
</comment>
<comment type="activity regulation">
    <text evidence="4">Inhibited by SERPINA1, SERPINC1 and SERPING1.</text>
</comment>
<comment type="subcellular location">
    <subcellularLocation>
        <location evidence="4 5">Cytoplasmic granule lumen</location>
    </subcellularLocation>
    <subcellularLocation>
        <location evidence="4 5">Secreted</location>
    </subcellularLocation>
    <text evidence="4">Stored in cytoplasmic granules and secreted as active enzyme in response to stimulation of neutrophils.</text>
</comment>
<comment type="tissue specificity">
    <text evidence="4 5">Detected in peripheral blood neutrophil granulocytes, but not in other types of leukocytes. Detected in neutrophils and neutrophil precursors in bone marrow (at protein level) (PubMed:22474388, PubMed:23904161). Detected in myeloblasts and promyelocytes in bone marrow (PubMed:23904161).</text>
</comment>
<comment type="PTM">
    <text evidence="5 10">After cleavage of the signal peptide, the N-terminus is probably further processed by CTSC (PubMed:22474388, PubMed:23904161). Processing by CTSC is probably required for accumulation in cytoplasmic granules; in the absence of CTSC the protein does not accumulate (PubMed:23904161).</text>
</comment>
<comment type="PTM">
    <text evidence="5">N-glycosylated.</text>
</comment>
<comment type="similarity">
    <text evidence="1">Belongs to the peptidase S1 family.</text>
</comment>
<reference key="1">
    <citation type="journal article" date="2003" name="Genome Res.">
        <title>The secreted protein discovery initiative (SPDI), a large-scale effort to identify novel human secreted and transmembrane proteins: a bioinformatics assessment.</title>
        <authorList>
            <person name="Clark H.F."/>
            <person name="Gurney A.L."/>
            <person name="Abaya E."/>
            <person name="Baker K."/>
            <person name="Baldwin D.T."/>
            <person name="Brush J."/>
            <person name="Chen J."/>
            <person name="Chow B."/>
            <person name="Chui C."/>
            <person name="Crowley C."/>
            <person name="Currell B."/>
            <person name="Deuel B."/>
            <person name="Dowd P."/>
            <person name="Eaton D."/>
            <person name="Foster J.S."/>
            <person name="Grimaldi C."/>
            <person name="Gu Q."/>
            <person name="Hass P.E."/>
            <person name="Heldens S."/>
            <person name="Huang A."/>
            <person name="Kim H.S."/>
            <person name="Klimowski L."/>
            <person name="Jin Y."/>
            <person name="Johnson S."/>
            <person name="Lee J."/>
            <person name="Lewis L."/>
            <person name="Liao D."/>
            <person name="Mark M.R."/>
            <person name="Robbie E."/>
            <person name="Sanchez C."/>
            <person name="Schoenfeld J."/>
            <person name="Seshagiri S."/>
            <person name="Simmons L."/>
            <person name="Singh J."/>
            <person name="Smith V."/>
            <person name="Stinson J."/>
            <person name="Vagts A."/>
            <person name="Vandlen R.L."/>
            <person name="Watanabe C."/>
            <person name="Wieand D."/>
            <person name="Woods K."/>
            <person name="Xie M.-H."/>
            <person name="Yansura D.G."/>
            <person name="Yi S."/>
            <person name="Yu G."/>
            <person name="Yuan J."/>
            <person name="Zhang M."/>
            <person name="Zhang Z."/>
            <person name="Goddard A.D."/>
            <person name="Wood W.I."/>
            <person name="Godowski P.J."/>
            <person name="Gray A.M."/>
        </authorList>
    </citation>
    <scope>NUCLEOTIDE SEQUENCE [LARGE SCALE MRNA]</scope>
    <scope>VARIANT LEU-143</scope>
</reference>
<reference key="2">
    <citation type="journal article" date="2004" name="Nature">
        <title>The DNA sequence and biology of human chromosome 19.</title>
        <authorList>
            <person name="Grimwood J."/>
            <person name="Gordon L.A."/>
            <person name="Olsen A.S."/>
            <person name="Terry A."/>
            <person name="Schmutz J."/>
            <person name="Lamerdin J.E."/>
            <person name="Hellsten U."/>
            <person name="Goodstein D."/>
            <person name="Couronne O."/>
            <person name="Tran-Gyamfi M."/>
            <person name="Aerts A."/>
            <person name="Altherr M."/>
            <person name="Ashworth L."/>
            <person name="Bajorek E."/>
            <person name="Black S."/>
            <person name="Branscomb E."/>
            <person name="Caenepeel S."/>
            <person name="Carrano A.V."/>
            <person name="Caoile C."/>
            <person name="Chan Y.M."/>
            <person name="Christensen M."/>
            <person name="Cleland C.A."/>
            <person name="Copeland A."/>
            <person name="Dalin E."/>
            <person name="Dehal P."/>
            <person name="Denys M."/>
            <person name="Detter J.C."/>
            <person name="Escobar J."/>
            <person name="Flowers D."/>
            <person name="Fotopulos D."/>
            <person name="Garcia C."/>
            <person name="Georgescu A.M."/>
            <person name="Glavina T."/>
            <person name="Gomez M."/>
            <person name="Gonzales E."/>
            <person name="Groza M."/>
            <person name="Hammon N."/>
            <person name="Hawkins T."/>
            <person name="Haydu L."/>
            <person name="Ho I."/>
            <person name="Huang W."/>
            <person name="Israni S."/>
            <person name="Jett J."/>
            <person name="Kadner K."/>
            <person name="Kimball H."/>
            <person name="Kobayashi A."/>
            <person name="Larionov V."/>
            <person name="Leem S.-H."/>
            <person name="Lopez F."/>
            <person name="Lou Y."/>
            <person name="Lowry S."/>
            <person name="Malfatti S."/>
            <person name="Martinez D."/>
            <person name="McCready P.M."/>
            <person name="Medina C."/>
            <person name="Morgan J."/>
            <person name="Nelson K."/>
            <person name="Nolan M."/>
            <person name="Ovcharenko I."/>
            <person name="Pitluck S."/>
            <person name="Pollard M."/>
            <person name="Popkie A.P."/>
            <person name="Predki P."/>
            <person name="Quan G."/>
            <person name="Ramirez L."/>
            <person name="Rash S."/>
            <person name="Retterer J."/>
            <person name="Rodriguez A."/>
            <person name="Rogers S."/>
            <person name="Salamov A."/>
            <person name="Salazar A."/>
            <person name="She X."/>
            <person name="Smith D."/>
            <person name="Slezak T."/>
            <person name="Solovyev V."/>
            <person name="Thayer N."/>
            <person name="Tice H."/>
            <person name="Tsai M."/>
            <person name="Ustaszewska A."/>
            <person name="Vo N."/>
            <person name="Wagner M."/>
            <person name="Wheeler J."/>
            <person name="Wu K."/>
            <person name="Xie G."/>
            <person name="Yang J."/>
            <person name="Dubchak I."/>
            <person name="Furey T.S."/>
            <person name="DeJong P."/>
            <person name="Dickson M."/>
            <person name="Gordon D."/>
            <person name="Eichler E.E."/>
            <person name="Pennacchio L.A."/>
            <person name="Richardson P."/>
            <person name="Stubbs L."/>
            <person name="Rokhsar D.S."/>
            <person name="Myers R.M."/>
            <person name="Rubin E.M."/>
            <person name="Lucas S.M."/>
        </authorList>
    </citation>
    <scope>NUCLEOTIDE SEQUENCE [LARGE SCALE GENOMIC DNA]</scope>
</reference>
<reference key="3">
    <citation type="journal article" date="2004" name="Genome Res.">
        <title>The status, quality, and expansion of the NIH full-length cDNA project: the Mammalian Gene Collection (MGC).</title>
        <authorList>
            <consortium name="The MGC Project Team"/>
        </authorList>
    </citation>
    <scope>NUCLEOTIDE SEQUENCE [LARGE SCALE MRNA]</scope>
    <scope>VARIANT LEU-143</scope>
    <source>
        <tissue>Testis</tissue>
    </source>
</reference>
<reference key="4">
    <citation type="journal article" date="2012" name="Proc. Natl. Acad. Sci. U.S.A.">
        <title>NSP4, an elastase-related protease in human neutrophils with arginine specificity.</title>
        <authorList>
            <person name="Perera N.C."/>
            <person name="Schilling O."/>
            <person name="Kittel H."/>
            <person name="Back W."/>
            <person name="Kremmer E."/>
            <person name="Jenne D.E."/>
        </authorList>
    </citation>
    <scope>CATALYTIC ACTIVITY</scope>
    <scope>FUNCTION</scope>
    <scope>ACTIVITY REGULATION</scope>
    <scope>SUBCELLULAR LOCATION</scope>
    <scope>SIGNAL SEQUENCE</scope>
    <scope>PROTEOLYTIC CLEAVAGE</scope>
    <scope>TISSUE SPECIFICITY</scope>
</reference>
<reference key="5">
    <citation type="journal article" date="2013" name="J. Immunol.">
        <title>NSP4 is stored in azurophil granules and released by activated neutrophils as active endoprotease with restricted specificity.</title>
        <authorList>
            <person name="Perera N.C."/>
            <person name="Wiesmueller K.H."/>
            <person name="Larsen M.T."/>
            <person name="Schacher B."/>
            <person name="Eickholz P."/>
            <person name="Borregaard N."/>
            <person name="Jenne D.E."/>
        </authorList>
    </citation>
    <scope>CATALYTIC ACTIVITY</scope>
    <scope>FUNCTION</scope>
    <scope>SUBCELLULAR LOCATION</scope>
    <scope>PROTEOLYTIC CLEAVAGE BY CTSC</scope>
    <scope>TISSUE SPECIFICITY</scope>
    <scope>GLYCOSYLATION</scope>
</reference>
<reference evidence="12 13 14 15" key="6">
    <citation type="journal article" date="2014" name="Structure">
        <title>Structures of neutrophil serine protease 4 reveal an unusual mechanism of substrate recognition by a trypsin-fold protease.</title>
        <authorList>
            <person name="Lin S.J."/>
            <person name="Dong K.C."/>
            <person name="Eigenbrot C."/>
            <person name="van Lookeren Campagne M."/>
            <person name="Kirchhofer D."/>
        </authorList>
    </citation>
    <scope>X-RAY CRYSTALLOGRAPHY (1.40 ANGSTROMS) OF 34-283 IN COMPLEX WITH SUBSTRATE ANALOG</scope>
    <scope>FUNCTION</scope>
    <scope>CATALYTIC ACTIVITY</scope>
    <scope>ACTIVE SITE</scope>
    <scope>GLYCOSYLATION AT ASN-129 AND ASN-189</scope>
    <scope>DISULFIDE BONDS</scope>
    <scope>HEPARIN-BINDING</scope>
    <scope>MUTAGENESIS OF PHE-213; SER-215 AND SER-235</scope>
</reference>
<name>PRS57_HUMAN</name>
<proteinExistence type="evidence at protein level"/>
<organism>
    <name type="scientific">Homo sapiens</name>
    <name type="common">Human</name>
    <dbReference type="NCBI Taxonomy" id="9606"/>
    <lineage>
        <taxon>Eukaryota</taxon>
        <taxon>Metazoa</taxon>
        <taxon>Chordata</taxon>
        <taxon>Craniata</taxon>
        <taxon>Vertebrata</taxon>
        <taxon>Euteleostomi</taxon>
        <taxon>Mammalia</taxon>
        <taxon>Eutheria</taxon>
        <taxon>Euarchontoglires</taxon>
        <taxon>Primates</taxon>
        <taxon>Haplorrhini</taxon>
        <taxon>Catarrhini</taxon>
        <taxon>Hominidae</taxon>
        <taxon>Homo</taxon>
    </lineage>
</organism>
<evidence type="ECO:0000255" key="1">
    <source>
        <dbReference type="PROSITE-ProRule" id="PRU00274"/>
    </source>
</evidence>
<evidence type="ECO:0000269" key="2">
    <source>
    </source>
</evidence>
<evidence type="ECO:0000269" key="3">
    <source>
    </source>
</evidence>
<evidence type="ECO:0000269" key="4">
    <source>
    </source>
</evidence>
<evidence type="ECO:0000269" key="5">
    <source>
    </source>
</evidence>
<evidence type="ECO:0000269" key="6">
    <source>
    </source>
</evidence>
<evidence type="ECO:0000303" key="7">
    <source>
    </source>
</evidence>
<evidence type="ECO:0000303" key="8">
    <source>
    </source>
</evidence>
<evidence type="ECO:0000303" key="9">
    <source>
    </source>
</evidence>
<evidence type="ECO:0000305" key="10">
    <source>
    </source>
</evidence>
<evidence type="ECO:0000305" key="11">
    <source>
    </source>
</evidence>
<evidence type="ECO:0007744" key="12">
    <source>
        <dbReference type="PDB" id="4Q7X"/>
    </source>
</evidence>
<evidence type="ECO:0007744" key="13">
    <source>
        <dbReference type="PDB" id="4Q7Y"/>
    </source>
</evidence>
<evidence type="ECO:0007744" key="14">
    <source>
        <dbReference type="PDB" id="4Q7Z"/>
    </source>
</evidence>
<evidence type="ECO:0007744" key="15">
    <source>
        <dbReference type="PDB" id="4Q80"/>
    </source>
</evidence>
<evidence type="ECO:0007829" key="16">
    <source>
        <dbReference type="PDB" id="4Q7X"/>
    </source>
</evidence>
<evidence type="ECO:0007829" key="17">
    <source>
        <dbReference type="PDB" id="4Q7Z"/>
    </source>
</evidence>
<feature type="signal peptide" evidence="4">
    <location>
        <begin position="1"/>
        <end position="31"/>
    </location>
</feature>
<feature type="chain" id="PRO_0000295853" description="Serine protease 57">
    <location>
        <begin position="32"/>
        <end position="283"/>
    </location>
</feature>
<feature type="domain" description="Peptidase S1" evidence="1">
    <location>
        <begin position="34"/>
        <end position="263"/>
    </location>
</feature>
<feature type="active site" description="Charge relay system" evidence="11">
    <location>
        <position position="74"/>
    </location>
</feature>
<feature type="active site" description="Charge relay system" evidence="11">
    <location>
        <position position="122"/>
    </location>
</feature>
<feature type="active site" description="Charge relay system" evidence="11">
    <location>
        <position position="218"/>
    </location>
</feature>
<feature type="glycosylation site" description="N-linked (GlcNAc...) asparagine" evidence="12 13 14 15">
    <location>
        <position position="129"/>
    </location>
</feature>
<feature type="glycosylation site" description="N-linked (GlcNAc...) asparagine" evidence="13 14 15">
    <location>
        <position position="189"/>
    </location>
</feature>
<feature type="disulfide bond" evidence="1 12 13 14 15">
    <location>
        <begin position="59"/>
        <end position="75"/>
    </location>
</feature>
<feature type="disulfide bond" evidence="1 12 13 14 15">
    <location>
        <begin position="157"/>
        <end position="224"/>
    </location>
</feature>
<feature type="disulfide bond" evidence="1 12 13 14 15">
    <location>
        <begin position="188"/>
        <end position="202"/>
    </location>
</feature>
<feature type="disulfide bond" evidence="1 12 13 14 15">
    <location>
        <begin position="214"/>
        <end position="239"/>
    </location>
</feature>
<feature type="sequence variant" id="VAR_051839" description="In dbSNP:rs8102982." evidence="2 3">
    <original>P</original>
    <variation>L</variation>
    <location>
        <position position="143"/>
    </location>
</feature>
<feature type="mutagenesis site" description="Decreases enzyme activity tenfold." evidence="6">
    <original>F</original>
    <variation>A</variation>
    <location>
        <position position="213"/>
    </location>
</feature>
<feature type="mutagenesis site" description="Decreases enzyme activity tenfold. Decreases enzyme activity twentyfold; when associated with G-236." evidence="6">
    <original>S</original>
    <variation>A</variation>
    <location>
        <position position="215"/>
    </location>
</feature>
<feature type="mutagenesis site" description="Decreases enzyme activity tenfold. Decreases enzyme activity twentyfold; when associated with A-215." evidence="6">
    <original>S</original>
    <variation>G</variation>
    <location>
        <position position="235"/>
    </location>
</feature>
<feature type="strand" evidence="17">
    <location>
        <begin position="48"/>
        <end position="53"/>
    </location>
</feature>
<feature type="strand" evidence="17">
    <location>
        <begin position="56"/>
        <end position="65"/>
    </location>
</feature>
<feature type="strand" evidence="17">
    <location>
        <begin position="68"/>
        <end position="71"/>
    </location>
</feature>
<feature type="helix" evidence="17">
    <location>
        <begin position="73"/>
        <end position="76"/>
    </location>
</feature>
<feature type="helix" evidence="17">
    <location>
        <begin position="81"/>
        <end position="83"/>
    </location>
</feature>
<feature type="strand" evidence="17">
    <location>
        <begin position="84"/>
        <end position="89"/>
    </location>
</feature>
<feature type="strand" evidence="17">
    <location>
        <begin position="101"/>
        <end position="103"/>
    </location>
</feature>
<feature type="strand" evidence="17">
    <location>
        <begin position="105"/>
        <end position="110"/>
    </location>
</feature>
<feature type="turn" evidence="16">
    <location>
        <begin position="116"/>
        <end position="118"/>
    </location>
</feature>
<feature type="strand" evidence="17">
    <location>
        <begin position="124"/>
        <end position="130"/>
    </location>
</feature>
<feature type="strand" evidence="16">
    <location>
        <begin position="135"/>
        <end position="137"/>
    </location>
</feature>
<feature type="strand" evidence="17">
    <location>
        <begin position="156"/>
        <end position="163"/>
    </location>
</feature>
<feature type="strand" evidence="17">
    <location>
        <begin position="176"/>
        <end position="183"/>
    </location>
</feature>
<feature type="helix" evidence="17">
    <location>
        <begin position="185"/>
        <end position="191"/>
    </location>
</feature>
<feature type="turn" evidence="17">
    <location>
        <begin position="192"/>
        <end position="194"/>
    </location>
</feature>
<feature type="strand" evidence="17">
    <location>
        <begin position="200"/>
        <end position="204"/>
    </location>
</feature>
<feature type="strand" evidence="17">
    <location>
        <begin position="206"/>
        <end position="209"/>
    </location>
</feature>
<feature type="strand" evidence="17">
    <location>
        <begin position="221"/>
        <end position="224"/>
    </location>
</feature>
<feature type="strand" evidence="17">
    <location>
        <begin position="227"/>
        <end position="234"/>
    </location>
</feature>
<feature type="strand" evidence="17">
    <location>
        <begin position="247"/>
        <end position="250"/>
    </location>
</feature>
<feature type="helix" evidence="17">
    <location>
        <begin position="251"/>
        <end position="254"/>
    </location>
</feature>
<feature type="helix" evidence="17">
    <location>
        <begin position="255"/>
        <end position="264"/>
    </location>
</feature>